<sequence>MSSGVAARRDAKKLVRSPSGLRMVPEHRAFGSPFGLEEPQWVPDKECPRCMQCDAKFDFITRKHHCRRCGKCFCDRCCSQKVPLRRMCFVDPVRQCADCALVSHREAEFYDKQLKVLLSGATFLVTFGDSEKPETMVCRLSNNQRCLVLDGDSHREIEIAHVCTVQILTEGFTPGAGSTRATGMLLQYTVPGAEAAAQLRLMAGEDASGSKRQAAAWLAAMHKATKLLYESRDQ</sequence>
<accession>Q8VCM3</accession>
<accession>A3KML1</accession>
<accession>Q3TBQ9</accession>
<accession>Q9D1E2</accession>
<proteinExistence type="evidence at protein level"/>
<dbReference type="EMBL" id="AK003661">
    <property type="protein sequence ID" value="BAB22923.1"/>
    <property type="status" value="ALT_INIT"/>
    <property type="molecule type" value="mRNA"/>
</dbReference>
<dbReference type="EMBL" id="AK155300">
    <property type="protein sequence ID" value="BAE33175.1"/>
    <property type="molecule type" value="mRNA"/>
</dbReference>
<dbReference type="EMBL" id="AK171099">
    <property type="protein sequence ID" value="BAE42248.1"/>
    <property type="molecule type" value="mRNA"/>
</dbReference>
<dbReference type="EMBL" id="BC019521">
    <property type="protein sequence ID" value="AAH19521.1"/>
    <property type="status" value="ALT_INIT"/>
    <property type="molecule type" value="mRNA"/>
</dbReference>
<dbReference type="EMBL" id="BC132248">
    <property type="protein sequence ID" value="AAI32249.1"/>
    <property type="status" value="ALT_INIT"/>
    <property type="molecule type" value="mRNA"/>
</dbReference>
<dbReference type="EMBL" id="BC132250">
    <property type="protein sequence ID" value="AAI32251.1"/>
    <property type="status" value="ALT_INIT"/>
    <property type="molecule type" value="mRNA"/>
</dbReference>
<dbReference type="CCDS" id="CCDS56865.1"/>
<dbReference type="RefSeq" id="NP_081028.3">
    <property type="nucleotide sequence ID" value="NM_026752.4"/>
</dbReference>
<dbReference type="SMR" id="Q8VCM3"/>
<dbReference type="FunCoup" id="Q8VCM3">
    <property type="interactions" value="49"/>
</dbReference>
<dbReference type="STRING" id="10090.ENSMUSP00000021714"/>
<dbReference type="iPTMnet" id="Q8VCM3"/>
<dbReference type="PhosphoSitePlus" id="Q8VCM3"/>
<dbReference type="PaxDb" id="10090-ENSMUSP00000021714"/>
<dbReference type="PeptideAtlas" id="Q8VCM3"/>
<dbReference type="ProteomicsDB" id="302058"/>
<dbReference type="Pumba" id="Q8VCM3"/>
<dbReference type="Antibodypedia" id="28114">
    <property type="antibodies" value="105 antibodies from 22 providers"/>
</dbReference>
<dbReference type="DNASU" id="68520"/>
<dbReference type="Ensembl" id="ENSMUST00000021714.9">
    <property type="protein sequence ID" value="ENSMUSP00000021714.8"/>
    <property type="gene ID" value="ENSMUSG00000021286.9"/>
</dbReference>
<dbReference type="GeneID" id="68520"/>
<dbReference type="KEGG" id="mmu:68520"/>
<dbReference type="UCSC" id="uc007pea.2">
    <property type="organism name" value="mouse"/>
</dbReference>
<dbReference type="AGR" id="MGI:1915770"/>
<dbReference type="CTD" id="79038"/>
<dbReference type="MGI" id="MGI:1915770">
    <property type="gene designation" value="Zfyve21"/>
</dbReference>
<dbReference type="VEuPathDB" id="HostDB:ENSMUSG00000021286"/>
<dbReference type="eggNOG" id="ENOG502QRR6">
    <property type="taxonomic scope" value="Eukaryota"/>
</dbReference>
<dbReference type="GeneTree" id="ENSGT00940000159639"/>
<dbReference type="HOGENOM" id="CLU_103398_0_0_1"/>
<dbReference type="InParanoid" id="Q8VCM3"/>
<dbReference type="OMA" id="HCEIEIA"/>
<dbReference type="PhylomeDB" id="Q8VCM3"/>
<dbReference type="TreeFam" id="TF329481"/>
<dbReference type="BioGRID-ORCS" id="68520">
    <property type="hits" value="2 hits in 75 CRISPR screens"/>
</dbReference>
<dbReference type="ChiTaRS" id="Zfyve21">
    <property type="organism name" value="mouse"/>
</dbReference>
<dbReference type="PRO" id="PR:Q8VCM3"/>
<dbReference type="Proteomes" id="UP000000589">
    <property type="component" value="Chromosome 12"/>
</dbReference>
<dbReference type="RNAct" id="Q8VCM3">
    <property type="molecule type" value="protein"/>
</dbReference>
<dbReference type="Bgee" id="ENSMUSG00000021286">
    <property type="expression patterns" value="Expressed in interventricular septum and 253 other cell types or tissues"/>
</dbReference>
<dbReference type="ExpressionAtlas" id="Q8VCM3">
    <property type="expression patterns" value="baseline and differential"/>
</dbReference>
<dbReference type="GO" id="GO:0005768">
    <property type="term" value="C:endosome"/>
    <property type="evidence" value="ECO:0007669"/>
    <property type="project" value="UniProtKB-SubCell"/>
</dbReference>
<dbReference type="GO" id="GO:0005925">
    <property type="term" value="C:focal adhesion"/>
    <property type="evidence" value="ECO:0007669"/>
    <property type="project" value="UniProtKB-SubCell"/>
</dbReference>
<dbReference type="GO" id="GO:0008270">
    <property type="term" value="F:zinc ion binding"/>
    <property type="evidence" value="ECO:0007669"/>
    <property type="project" value="UniProtKB-KW"/>
</dbReference>
<dbReference type="CDD" id="cd15727">
    <property type="entry name" value="FYVE_ZF21"/>
    <property type="match status" value="1"/>
</dbReference>
<dbReference type="Gene3D" id="2.30.29.160">
    <property type="entry name" value="Zinc finger FYVE domain-containing protein 21, C-terminal"/>
    <property type="match status" value="1"/>
</dbReference>
<dbReference type="Gene3D" id="3.30.40.10">
    <property type="entry name" value="Zinc/RING finger domain, C3HC4 (zinc finger)"/>
    <property type="match status" value="1"/>
</dbReference>
<dbReference type="InterPro" id="IPR052113">
    <property type="entry name" value="FYVE-type_Zinc_Finger"/>
</dbReference>
<dbReference type="InterPro" id="IPR032031">
    <property type="entry name" value="ZFYVE21_C"/>
</dbReference>
<dbReference type="InterPro" id="IPR038632">
    <property type="entry name" value="ZFYVE21_C_sf"/>
</dbReference>
<dbReference type="InterPro" id="IPR000306">
    <property type="entry name" value="Znf_FYVE"/>
</dbReference>
<dbReference type="InterPro" id="IPR017455">
    <property type="entry name" value="Znf_FYVE-rel"/>
</dbReference>
<dbReference type="InterPro" id="IPR011011">
    <property type="entry name" value="Znf_FYVE_PHD"/>
</dbReference>
<dbReference type="InterPro" id="IPR013083">
    <property type="entry name" value="Znf_RING/FYVE/PHD"/>
</dbReference>
<dbReference type="PANTHER" id="PTHR39490">
    <property type="entry name" value="ARRESTIN DOMAIN-CONTAINING PROTEIN D"/>
    <property type="match status" value="1"/>
</dbReference>
<dbReference type="PANTHER" id="PTHR39490:SF8">
    <property type="entry name" value="ZINC FINGER FYVE DOMAIN-CONTAINING PROTEIN 21"/>
    <property type="match status" value="1"/>
</dbReference>
<dbReference type="Pfam" id="PF01363">
    <property type="entry name" value="FYVE"/>
    <property type="match status" value="1"/>
</dbReference>
<dbReference type="Pfam" id="PF16696">
    <property type="entry name" value="ZFYVE21_C"/>
    <property type="match status" value="1"/>
</dbReference>
<dbReference type="SMART" id="SM00064">
    <property type="entry name" value="FYVE"/>
    <property type="match status" value="1"/>
</dbReference>
<dbReference type="SUPFAM" id="SSF57903">
    <property type="entry name" value="FYVE/PHD zinc finger"/>
    <property type="match status" value="1"/>
</dbReference>
<dbReference type="PROSITE" id="PS50178">
    <property type="entry name" value="ZF_FYVE"/>
    <property type="match status" value="1"/>
</dbReference>
<name>ZFY21_MOUSE</name>
<evidence type="ECO:0000250" key="1"/>
<evidence type="ECO:0000255" key="2">
    <source>
        <dbReference type="PROSITE-ProRule" id="PRU00091"/>
    </source>
</evidence>
<evidence type="ECO:0000269" key="3">
    <source>
    </source>
</evidence>
<evidence type="ECO:0000305" key="4"/>
<organism>
    <name type="scientific">Mus musculus</name>
    <name type="common">Mouse</name>
    <dbReference type="NCBI Taxonomy" id="10090"/>
    <lineage>
        <taxon>Eukaryota</taxon>
        <taxon>Metazoa</taxon>
        <taxon>Chordata</taxon>
        <taxon>Craniata</taxon>
        <taxon>Vertebrata</taxon>
        <taxon>Euteleostomi</taxon>
        <taxon>Mammalia</taxon>
        <taxon>Eutheria</taxon>
        <taxon>Euarchontoglires</taxon>
        <taxon>Glires</taxon>
        <taxon>Rodentia</taxon>
        <taxon>Myomorpha</taxon>
        <taxon>Muroidea</taxon>
        <taxon>Muridae</taxon>
        <taxon>Murinae</taxon>
        <taxon>Mus</taxon>
        <taxon>Mus</taxon>
    </lineage>
</organism>
<keyword id="KW-0965">Cell junction</keyword>
<keyword id="KW-0968">Cytoplasmic vesicle</keyword>
<keyword id="KW-0967">Endosome</keyword>
<keyword id="KW-0479">Metal-binding</keyword>
<keyword id="KW-1185">Reference proteome</keyword>
<keyword id="KW-0862">Zinc</keyword>
<keyword id="KW-0863">Zinc-finger</keyword>
<comment type="function">
    <text evidence="1">Plays a role in cell adhesion, and thereby in cell motility which requires repeated formation and disassembly of focal adhesions. Regulates microtubule-induced PTK2/FAK1 dephosphorylation, an event important for focal adhesion disassembly, as well as integrin beta-1/ITGB1 cell surface expression (By similarity).</text>
</comment>
<comment type="subunit">
    <text evidence="1">Interacts with PTK2/FAK1.</text>
</comment>
<comment type="subcellular location">
    <subcellularLocation>
        <location>Cell junction</location>
        <location>Focal adhesion</location>
    </subcellularLocation>
    <subcellularLocation>
        <location evidence="1">Cytoplasmic vesicle</location>
    </subcellularLocation>
    <subcellularLocation>
        <location evidence="1">Endosome</location>
    </subcellularLocation>
</comment>
<comment type="tissue specificity">
    <text evidence="3">Widely expressed.</text>
</comment>
<comment type="domain">
    <text evidence="1">The FYVE-type zinc finger mediates interaction with PTK2/FAK1, and also interaction with PI(3)P and association with endosomes.</text>
</comment>
<comment type="domain">
    <text evidence="1">The C-terminal region exhibits a structure similar to canonical PH domains, but lacks a positively charged interface to bind phosphatidylinositol phosphate.</text>
</comment>
<comment type="sequence caution" evidence="4">
    <conflict type="erroneous initiation">
        <sequence resource="EMBL-CDS" id="AAH19521"/>
    </conflict>
    <text>Truncated N-terminus.</text>
</comment>
<comment type="sequence caution" evidence="4">
    <conflict type="erroneous initiation">
        <sequence resource="EMBL-CDS" id="AAI32249"/>
    </conflict>
    <text>Truncated N-terminus.</text>
</comment>
<comment type="sequence caution" evidence="4">
    <conflict type="erroneous initiation">
        <sequence resource="EMBL-CDS" id="AAI32251"/>
    </conflict>
    <text>Truncated N-terminus.</text>
</comment>
<comment type="sequence caution" evidence="4">
    <conflict type="erroneous initiation">
        <sequence resource="EMBL-CDS" id="BAB22923"/>
    </conflict>
    <text>Truncated N-terminus.</text>
</comment>
<gene>
    <name type="primary">Zfyve21</name>
</gene>
<reference key="1">
    <citation type="journal article" date="2005" name="Science">
        <title>The transcriptional landscape of the mammalian genome.</title>
        <authorList>
            <person name="Carninci P."/>
            <person name="Kasukawa T."/>
            <person name="Katayama S."/>
            <person name="Gough J."/>
            <person name="Frith M.C."/>
            <person name="Maeda N."/>
            <person name="Oyama R."/>
            <person name="Ravasi T."/>
            <person name="Lenhard B."/>
            <person name="Wells C."/>
            <person name="Kodzius R."/>
            <person name="Shimokawa K."/>
            <person name="Bajic V.B."/>
            <person name="Brenner S.E."/>
            <person name="Batalov S."/>
            <person name="Forrest A.R."/>
            <person name="Zavolan M."/>
            <person name="Davis M.J."/>
            <person name="Wilming L.G."/>
            <person name="Aidinis V."/>
            <person name="Allen J.E."/>
            <person name="Ambesi-Impiombato A."/>
            <person name="Apweiler R."/>
            <person name="Aturaliya R.N."/>
            <person name="Bailey T.L."/>
            <person name="Bansal M."/>
            <person name="Baxter L."/>
            <person name="Beisel K.W."/>
            <person name="Bersano T."/>
            <person name="Bono H."/>
            <person name="Chalk A.M."/>
            <person name="Chiu K.P."/>
            <person name="Choudhary V."/>
            <person name="Christoffels A."/>
            <person name="Clutterbuck D.R."/>
            <person name="Crowe M.L."/>
            <person name="Dalla E."/>
            <person name="Dalrymple B.P."/>
            <person name="de Bono B."/>
            <person name="Della Gatta G."/>
            <person name="di Bernardo D."/>
            <person name="Down T."/>
            <person name="Engstrom P."/>
            <person name="Fagiolini M."/>
            <person name="Faulkner G."/>
            <person name="Fletcher C.F."/>
            <person name="Fukushima T."/>
            <person name="Furuno M."/>
            <person name="Futaki S."/>
            <person name="Gariboldi M."/>
            <person name="Georgii-Hemming P."/>
            <person name="Gingeras T.R."/>
            <person name="Gojobori T."/>
            <person name="Green R.E."/>
            <person name="Gustincich S."/>
            <person name="Harbers M."/>
            <person name="Hayashi Y."/>
            <person name="Hensch T.K."/>
            <person name="Hirokawa N."/>
            <person name="Hill D."/>
            <person name="Huminiecki L."/>
            <person name="Iacono M."/>
            <person name="Ikeo K."/>
            <person name="Iwama A."/>
            <person name="Ishikawa T."/>
            <person name="Jakt M."/>
            <person name="Kanapin A."/>
            <person name="Katoh M."/>
            <person name="Kawasawa Y."/>
            <person name="Kelso J."/>
            <person name="Kitamura H."/>
            <person name="Kitano H."/>
            <person name="Kollias G."/>
            <person name="Krishnan S.P."/>
            <person name="Kruger A."/>
            <person name="Kummerfeld S.K."/>
            <person name="Kurochkin I.V."/>
            <person name="Lareau L.F."/>
            <person name="Lazarevic D."/>
            <person name="Lipovich L."/>
            <person name="Liu J."/>
            <person name="Liuni S."/>
            <person name="McWilliam S."/>
            <person name="Madan Babu M."/>
            <person name="Madera M."/>
            <person name="Marchionni L."/>
            <person name="Matsuda H."/>
            <person name="Matsuzawa S."/>
            <person name="Miki H."/>
            <person name="Mignone F."/>
            <person name="Miyake S."/>
            <person name="Morris K."/>
            <person name="Mottagui-Tabar S."/>
            <person name="Mulder N."/>
            <person name="Nakano N."/>
            <person name="Nakauchi H."/>
            <person name="Ng P."/>
            <person name="Nilsson R."/>
            <person name="Nishiguchi S."/>
            <person name="Nishikawa S."/>
            <person name="Nori F."/>
            <person name="Ohara O."/>
            <person name="Okazaki Y."/>
            <person name="Orlando V."/>
            <person name="Pang K.C."/>
            <person name="Pavan W.J."/>
            <person name="Pavesi G."/>
            <person name="Pesole G."/>
            <person name="Petrovsky N."/>
            <person name="Piazza S."/>
            <person name="Reed J."/>
            <person name="Reid J.F."/>
            <person name="Ring B.Z."/>
            <person name="Ringwald M."/>
            <person name="Rost B."/>
            <person name="Ruan Y."/>
            <person name="Salzberg S.L."/>
            <person name="Sandelin A."/>
            <person name="Schneider C."/>
            <person name="Schoenbach C."/>
            <person name="Sekiguchi K."/>
            <person name="Semple C.A."/>
            <person name="Seno S."/>
            <person name="Sessa L."/>
            <person name="Sheng Y."/>
            <person name="Shibata Y."/>
            <person name="Shimada H."/>
            <person name="Shimada K."/>
            <person name="Silva D."/>
            <person name="Sinclair B."/>
            <person name="Sperling S."/>
            <person name="Stupka E."/>
            <person name="Sugiura K."/>
            <person name="Sultana R."/>
            <person name="Takenaka Y."/>
            <person name="Taki K."/>
            <person name="Tammoja K."/>
            <person name="Tan S.L."/>
            <person name="Tang S."/>
            <person name="Taylor M.S."/>
            <person name="Tegner J."/>
            <person name="Teichmann S.A."/>
            <person name="Ueda H.R."/>
            <person name="van Nimwegen E."/>
            <person name="Verardo R."/>
            <person name="Wei C.L."/>
            <person name="Yagi K."/>
            <person name="Yamanishi H."/>
            <person name="Zabarovsky E."/>
            <person name="Zhu S."/>
            <person name="Zimmer A."/>
            <person name="Hide W."/>
            <person name="Bult C."/>
            <person name="Grimmond S.M."/>
            <person name="Teasdale R.D."/>
            <person name="Liu E.T."/>
            <person name="Brusic V."/>
            <person name="Quackenbush J."/>
            <person name="Wahlestedt C."/>
            <person name="Mattick J.S."/>
            <person name="Hume D.A."/>
            <person name="Kai C."/>
            <person name="Sasaki D."/>
            <person name="Tomaru Y."/>
            <person name="Fukuda S."/>
            <person name="Kanamori-Katayama M."/>
            <person name="Suzuki M."/>
            <person name="Aoki J."/>
            <person name="Arakawa T."/>
            <person name="Iida J."/>
            <person name="Imamura K."/>
            <person name="Itoh M."/>
            <person name="Kato T."/>
            <person name="Kawaji H."/>
            <person name="Kawagashira N."/>
            <person name="Kawashima T."/>
            <person name="Kojima M."/>
            <person name="Kondo S."/>
            <person name="Konno H."/>
            <person name="Nakano K."/>
            <person name="Ninomiya N."/>
            <person name="Nishio T."/>
            <person name="Okada M."/>
            <person name="Plessy C."/>
            <person name="Shibata K."/>
            <person name="Shiraki T."/>
            <person name="Suzuki S."/>
            <person name="Tagami M."/>
            <person name="Waki K."/>
            <person name="Watahiki A."/>
            <person name="Okamura-Oho Y."/>
            <person name="Suzuki H."/>
            <person name="Kawai J."/>
            <person name="Hayashizaki Y."/>
        </authorList>
    </citation>
    <scope>NUCLEOTIDE SEQUENCE [LARGE SCALE MRNA]</scope>
    <source>
        <strain>C57BL/6J</strain>
        <strain>NOD</strain>
        <tissue>Dendritic cell</tissue>
        <tissue>Embryo</tissue>
    </source>
</reference>
<reference key="2">
    <citation type="journal article" date="2004" name="Genome Res.">
        <title>The status, quality, and expansion of the NIH full-length cDNA project: the Mammalian Gene Collection (MGC).</title>
        <authorList>
            <consortium name="The MGC Project Team"/>
        </authorList>
    </citation>
    <scope>NUCLEOTIDE SEQUENCE [LARGE SCALE MRNA]</scope>
    <source>
        <strain>FVB/N</strain>
        <tissue>Brain</tissue>
        <tissue>Colon</tissue>
    </source>
</reference>
<reference key="3">
    <citation type="journal article" date="2010" name="Cell">
        <title>A tissue-specific atlas of mouse protein phosphorylation and expression.</title>
        <authorList>
            <person name="Huttlin E.L."/>
            <person name="Jedrychowski M.P."/>
            <person name="Elias J.E."/>
            <person name="Goswami T."/>
            <person name="Rad R."/>
            <person name="Beausoleil S.A."/>
            <person name="Villen J."/>
            <person name="Haas W."/>
            <person name="Sowa M.E."/>
            <person name="Gygi S.P."/>
        </authorList>
    </citation>
    <scope>IDENTIFICATION BY MASS SPECTROMETRY [LARGE SCALE ANALYSIS]</scope>
    <source>
        <tissue>Kidney</tissue>
    </source>
</reference>
<reference key="4">
    <citation type="journal article" date="2010" name="J. Biol. Chem.">
        <title>ZF21 protein regulates cell adhesion and motility.</title>
        <authorList>
            <person name="Nagano M."/>
            <person name="Hoshino D."/>
            <person name="Sakamoto T."/>
            <person name="Kawasaki N."/>
            <person name="Koshikawa N."/>
            <person name="Seiki M."/>
        </authorList>
    </citation>
    <scope>TISSUE SPECIFICITY</scope>
</reference>
<feature type="chain" id="PRO_0000098721" description="Zinc finger FYVE domain-containing protein 21">
    <location>
        <begin position="1"/>
        <end position="234"/>
    </location>
</feature>
<feature type="zinc finger region" description="FYVE-type" evidence="2">
    <location>
        <begin position="44"/>
        <end position="104"/>
    </location>
</feature>
<feature type="region of interest" description="PH-like" evidence="1">
    <location>
        <begin position="107"/>
        <end position="234"/>
    </location>
</feature>
<feature type="binding site" evidence="2">
    <location>
        <position position="50"/>
    </location>
    <ligand>
        <name>Zn(2+)</name>
        <dbReference type="ChEBI" id="CHEBI:29105"/>
        <label>1</label>
    </ligand>
</feature>
<feature type="binding site" evidence="2">
    <location>
        <position position="53"/>
    </location>
    <ligand>
        <name>Zn(2+)</name>
        <dbReference type="ChEBI" id="CHEBI:29105"/>
        <label>1</label>
    </ligand>
</feature>
<feature type="binding site" evidence="2">
    <location>
        <position position="66"/>
    </location>
    <ligand>
        <name>Zn(2+)</name>
        <dbReference type="ChEBI" id="CHEBI:29105"/>
        <label>2</label>
    </ligand>
</feature>
<feature type="binding site" evidence="2">
    <location>
        <position position="69"/>
    </location>
    <ligand>
        <name>Zn(2+)</name>
        <dbReference type="ChEBI" id="CHEBI:29105"/>
        <label>2</label>
    </ligand>
</feature>
<feature type="binding site" evidence="2">
    <location>
        <position position="74"/>
    </location>
    <ligand>
        <name>Zn(2+)</name>
        <dbReference type="ChEBI" id="CHEBI:29105"/>
        <label>1</label>
    </ligand>
</feature>
<feature type="binding site" evidence="2">
    <location>
        <position position="77"/>
    </location>
    <ligand>
        <name>Zn(2+)</name>
        <dbReference type="ChEBI" id="CHEBI:29105"/>
        <label>1</label>
    </ligand>
</feature>
<feature type="binding site" evidence="2">
    <location>
        <position position="96"/>
    </location>
    <ligand>
        <name>Zn(2+)</name>
        <dbReference type="ChEBI" id="CHEBI:29105"/>
        <label>2</label>
    </ligand>
</feature>
<feature type="binding site" evidence="2">
    <location>
        <position position="99"/>
    </location>
    <ligand>
        <name>Zn(2+)</name>
        <dbReference type="ChEBI" id="CHEBI:29105"/>
        <label>2</label>
    </ligand>
</feature>
<feature type="sequence conflict" description="In Ref. 1; BAB22923." evidence="4" ref="1">
    <original>R</original>
    <variation>L</variation>
    <location>
        <position position="180"/>
    </location>
</feature>
<protein>
    <recommendedName>
        <fullName>Zinc finger FYVE domain-containing protein 21</fullName>
    </recommendedName>
</protein>